<evidence type="ECO:0000255" key="1">
    <source>
        <dbReference type="HAMAP-Rule" id="MF_00829"/>
    </source>
</evidence>
<name>Y1865_STAA1</name>
<feature type="chain" id="PRO_1000062721" description="UPF0435 protein SAHV_1865">
    <location>
        <begin position="1"/>
        <end position="68"/>
    </location>
</feature>
<comment type="similarity">
    <text evidence="1">Belongs to the UPF0435 family.</text>
</comment>
<accession>A7X400</accession>
<organism>
    <name type="scientific">Staphylococcus aureus (strain Mu3 / ATCC 700698)</name>
    <dbReference type="NCBI Taxonomy" id="418127"/>
    <lineage>
        <taxon>Bacteria</taxon>
        <taxon>Bacillati</taxon>
        <taxon>Bacillota</taxon>
        <taxon>Bacilli</taxon>
        <taxon>Bacillales</taxon>
        <taxon>Staphylococcaceae</taxon>
        <taxon>Staphylococcus</taxon>
    </lineage>
</organism>
<dbReference type="EMBL" id="AP009324">
    <property type="protein sequence ID" value="BAF78748.1"/>
    <property type="molecule type" value="Genomic_DNA"/>
</dbReference>
<dbReference type="SMR" id="A7X400"/>
<dbReference type="KEGG" id="saw:SAHV_1865"/>
<dbReference type="HOGENOM" id="CLU_199533_0_0_9"/>
<dbReference type="HAMAP" id="MF_00829">
    <property type="entry name" value="UPF0435"/>
    <property type="match status" value="1"/>
</dbReference>
<dbReference type="InterPro" id="IPR009507">
    <property type="entry name" value="UPF0435"/>
</dbReference>
<dbReference type="Pfam" id="PF06569">
    <property type="entry name" value="DUF1128"/>
    <property type="match status" value="1"/>
</dbReference>
<sequence>MAMTNEEKVLAIREKLNIVNQGLLDPEKYKNANEEELTDIYDFVQSRERLSPSEVTAIADALGQLRHD</sequence>
<gene>
    <name type="ordered locus">SAHV_1865</name>
</gene>
<proteinExistence type="inferred from homology"/>
<reference key="1">
    <citation type="journal article" date="2008" name="Antimicrob. Agents Chemother.">
        <title>Mutated response regulator graR is responsible for phenotypic conversion of Staphylococcus aureus from heterogeneous vancomycin-intermediate resistance to vancomycin-intermediate resistance.</title>
        <authorList>
            <person name="Neoh H.-M."/>
            <person name="Cui L."/>
            <person name="Yuzawa H."/>
            <person name="Takeuchi F."/>
            <person name="Matsuo M."/>
            <person name="Hiramatsu K."/>
        </authorList>
    </citation>
    <scope>NUCLEOTIDE SEQUENCE [LARGE SCALE GENOMIC DNA]</scope>
    <source>
        <strain>Mu3 / ATCC 700698</strain>
    </source>
</reference>
<protein>
    <recommendedName>
        <fullName evidence="1">UPF0435 protein SAHV_1865</fullName>
    </recommendedName>
</protein>